<protein>
    <recommendedName>
        <fullName evidence="5">Lactosylceramide 1,3-N-acetyl-beta-D-glucosaminyltransferase</fullName>
        <ecNumber evidence="2">2.4.1.206</ecNumber>
    </recommendedName>
    <alternativeName>
        <fullName>Lactotriaosylceramide synthase</fullName>
        <shortName>Lc(3)Cer synthase</shortName>
        <shortName>Lc3 synthase</shortName>
    </alternativeName>
    <alternativeName>
        <fullName>UDP-GlcNAc:beta-Gal beta-1,3-N-acetylglucosaminyltransferase 5</fullName>
        <shortName>BGnT-5</shortName>
        <shortName>Beta-1,3-Gn-T5</shortName>
        <shortName>Beta-1,3-N-acetylglucosaminyltransferase 5</shortName>
        <shortName>Beta3Gn-T5</shortName>
    </alternativeName>
</protein>
<accession>Q99NB2</accession>
<feature type="chain" id="PRO_0000289212" description="Lactosylceramide 1,3-N-acetyl-beta-D-glucosaminyltransferase">
    <location>
        <begin position="1"/>
        <end position="377"/>
    </location>
</feature>
<feature type="topological domain" description="Cytoplasmic" evidence="4">
    <location>
        <begin position="1"/>
        <end position="14"/>
    </location>
</feature>
<feature type="transmembrane region" description="Helical; Signal-anchor for type II membrane protein" evidence="4">
    <location>
        <begin position="15"/>
        <end position="35"/>
    </location>
</feature>
<feature type="topological domain" description="Lumenal" evidence="4">
    <location>
        <begin position="36"/>
        <end position="377"/>
    </location>
</feature>
<feature type="glycosylation site" description="N-linked (GlcNAc...) asparagine" evidence="4">
    <location>
        <position position="58"/>
    </location>
</feature>
<sequence>MRVFVSSRRVKRWQFFHLFAICFILSFMVFWGPINNYIMSHMKSYSYRYLINSYDFVNDSLSLKHSSVQPHHPYLINHREKCQAQDVLLLLFIKTAPENYERRSAIRKTWGNENYVQSQLNANIKILFALGTPHPLKGKELQKRLIWEDQVYHDIIQQDFTDSFHNLTFKFLLQFGWANTFCPHARFLMTADDDIFIHMPNLIEYLQGLEQVGVRDFWIGHVHRGGPPVRDKSSKYYVPYEMYKWPAYPDYTAGAAYVVSNDVAAKIYEASQTLNSSMYIDDVFMGLCANKVGVVPQDHVFFSGEGKIPYHPCIYEKMITSHGHSQDLQDLWVEATDPKVKDISKGFFGQIYCRLIKIVLLCRLTYRNSYPCRAAFA</sequence>
<keyword id="KW-0217">Developmental protein</keyword>
<keyword id="KW-0325">Glycoprotein</keyword>
<keyword id="KW-0328">Glycosyltransferase</keyword>
<keyword id="KW-0333">Golgi apparatus</keyword>
<keyword id="KW-0443">Lipid metabolism</keyword>
<keyword id="KW-0472">Membrane</keyword>
<keyword id="KW-1185">Reference proteome</keyword>
<keyword id="KW-0735">Signal-anchor</keyword>
<keyword id="KW-0808">Transferase</keyword>
<keyword id="KW-0812">Transmembrane</keyword>
<keyword id="KW-1133">Transmembrane helix</keyword>
<gene>
    <name evidence="6" type="primary">B3gnt5</name>
</gene>
<proteinExistence type="evidence at transcript level"/>
<name>B3GN5_RAT</name>
<evidence type="ECO:0000250" key="1"/>
<evidence type="ECO:0000250" key="2">
    <source>
        <dbReference type="UniProtKB" id="Q8BGY6"/>
    </source>
</evidence>
<evidence type="ECO:0000250" key="3">
    <source>
        <dbReference type="UniProtKB" id="Q9BYG0"/>
    </source>
</evidence>
<evidence type="ECO:0000255" key="4"/>
<evidence type="ECO:0000305" key="5"/>
<evidence type="ECO:0000312" key="6">
    <source>
        <dbReference type="RGD" id="70955"/>
    </source>
</evidence>
<reference key="1">
    <citation type="journal article" date="2004" name="Nature">
        <title>Genome sequence of the Brown Norway rat yields insights into mammalian evolution.</title>
        <authorList>
            <person name="Gibbs R.A."/>
            <person name="Weinstock G.M."/>
            <person name="Metzker M.L."/>
            <person name="Muzny D.M."/>
            <person name="Sodergren E.J."/>
            <person name="Scherer S."/>
            <person name="Scott G."/>
            <person name="Steffen D."/>
            <person name="Worley K.C."/>
            <person name="Burch P.E."/>
            <person name="Okwuonu G."/>
            <person name="Hines S."/>
            <person name="Lewis L."/>
            <person name="Deramo C."/>
            <person name="Delgado O."/>
            <person name="Dugan-Rocha S."/>
            <person name="Miner G."/>
            <person name="Morgan M."/>
            <person name="Hawes A."/>
            <person name="Gill R."/>
            <person name="Holt R.A."/>
            <person name="Adams M.D."/>
            <person name="Amanatides P.G."/>
            <person name="Baden-Tillson H."/>
            <person name="Barnstead M."/>
            <person name="Chin S."/>
            <person name="Evans C.A."/>
            <person name="Ferriera S."/>
            <person name="Fosler C."/>
            <person name="Glodek A."/>
            <person name="Gu Z."/>
            <person name="Jennings D."/>
            <person name="Kraft C.L."/>
            <person name="Nguyen T."/>
            <person name="Pfannkoch C.M."/>
            <person name="Sitter C."/>
            <person name="Sutton G.G."/>
            <person name="Venter J.C."/>
            <person name="Woodage T."/>
            <person name="Smith D."/>
            <person name="Lee H.-M."/>
            <person name="Gustafson E."/>
            <person name="Cahill P."/>
            <person name="Kana A."/>
            <person name="Doucette-Stamm L."/>
            <person name="Weinstock K."/>
            <person name="Fechtel K."/>
            <person name="Weiss R.B."/>
            <person name="Dunn D.M."/>
            <person name="Green E.D."/>
            <person name="Blakesley R.W."/>
            <person name="Bouffard G.G."/>
            <person name="De Jong P.J."/>
            <person name="Osoegawa K."/>
            <person name="Zhu B."/>
            <person name="Marra M."/>
            <person name="Schein J."/>
            <person name="Bosdet I."/>
            <person name="Fjell C."/>
            <person name="Jones S."/>
            <person name="Krzywinski M."/>
            <person name="Mathewson C."/>
            <person name="Siddiqui A."/>
            <person name="Wye N."/>
            <person name="McPherson J."/>
            <person name="Zhao S."/>
            <person name="Fraser C.M."/>
            <person name="Shetty J."/>
            <person name="Shatsman S."/>
            <person name="Geer K."/>
            <person name="Chen Y."/>
            <person name="Abramzon S."/>
            <person name="Nierman W.C."/>
            <person name="Havlak P.H."/>
            <person name="Chen R."/>
            <person name="Durbin K.J."/>
            <person name="Egan A."/>
            <person name="Ren Y."/>
            <person name="Song X.-Z."/>
            <person name="Li B."/>
            <person name="Liu Y."/>
            <person name="Qin X."/>
            <person name="Cawley S."/>
            <person name="Cooney A.J."/>
            <person name="D'Souza L.M."/>
            <person name="Martin K."/>
            <person name="Wu J.Q."/>
            <person name="Gonzalez-Garay M.L."/>
            <person name="Jackson A.R."/>
            <person name="Kalafus K.J."/>
            <person name="McLeod M.P."/>
            <person name="Milosavljevic A."/>
            <person name="Virk D."/>
            <person name="Volkov A."/>
            <person name="Wheeler D.A."/>
            <person name="Zhang Z."/>
            <person name="Bailey J.A."/>
            <person name="Eichler E.E."/>
            <person name="Tuzun E."/>
            <person name="Birney E."/>
            <person name="Mongin E."/>
            <person name="Ureta-Vidal A."/>
            <person name="Woodwark C."/>
            <person name="Zdobnov E."/>
            <person name="Bork P."/>
            <person name="Suyama M."/>
            <person name="Torrents D."/>
            <person name="Alexandersson M."/>
            <person name="Trask B.J."/>
            <person name="Young J.M."/>
            <person name="Huang H."/>
            <person name="Wang H."/>
            <person name="Xing H."/>
            <person name="Daniels S."/>
            <person name="Gietzen D."/>
            <person name="Schmidt J."/>
            <person name="Stevens K."/>
            <person name="Vitt U."/>
            <person name="Wingrove J."/>
            <person name="Camara F."/>
            <person name="Mar Alba M."/>
            <person name="Abril J.F."/>
            <person name="Guigo R."/>
            <person name="Smit A."/>
            <person name="Dubchak I."/>
            <person name="Rubin E.M."/>
            <person name="Couronne O."/>
            <person name="Poliakov A."/>
            <person name="Huebner N."/>
            <person name="Ganten D."/>
            <person name="Goesele C."/>
            <person name="Hummel O."/>
            <person name="Kreitler T."/>
            <person name="Lee Y.-A."/>
            <person name="Monti J."/>
            <person name="Schulz H."/>
            <person name="Zimdahl H."/>
            <person name="Himmelbauer H."/>
            <person name="Lehrach H."/>
            <person name="Jacob H.J."/>
            <person name="Bromberg S."/>
            <person name="Gullings-Handley J."/>
            <person name="Jensen-Seaman M.I."/>
            <person name="Kwitek A.E."/>
            <person name="Lazar J."/>
            <person name="Pasko D."/>
            <person name="Tonellato P.J."/>
            <person name="Twigger S."/>
            <person name="Ponting C.P."/>
            <person name="Duarte J.M."/>
            <person name="Rice S."/>
            <person name="Goodstadt L."/>
            <person name="Beatson S.A."/>
            <person name="Emes R.D."/>
            <person name="Winter E.E."/>
            <person name="Webber C."/>
            <person name="Brandt P."/>
            <person name="Nyakatura G."/>
            <person name="Adetobi M."/>
            <person name="Chiaromonte F."/>
            <person name="Elnitski L."/>
            <person name="Eswara P."/>
            <person name="Hardison R.C."/>
            <person name="Hou M."/>
            <person name="Kolbe D."/>
            <person name="Makova K."/>
            <person name="Miller W."/>
            <person name="Nekrutenko A."/>
            <person name="Riemer C."/>
            <person name="Schwartz S."/>
            <person name="Taylor J."/>
            <person name="Yang S."/>
            <person name="Zhang Y."/>
            <person name="Lindpaintner K."/>
            <person name="Andrews T.D."/>
            <person name="Caccamo M."/>
            <person name="Clamp M."/>
            <person name="Clarke L."/>
            <person name="Curwen V."/>
            <person name="Durbin R.M."/>
            <person name="Eyras E."/>
            <person name="Searle S.M."/>
            <person name="Cooper G.M."/>
            <person name="Batzoglou S."/>
            <person name="Brudno M."/>
            <person name="Sidow A."/>
            <person name="Stone E.A."/>
            <person name="Payseur B.A."/>
            <person name="Bourque G."/>
            <person name="Lopez-Otin C."/>
            <person name="Puente X.S."/>
            <person name="Chakrabarti K."/>
            <person name="Chatterji S."/>
            <person name="Dewey C."/>
            <person name="Pachter L."/>
            <person name="Bray N."/>
            <person name="Yap V.B."/>
            <person name="Caspi A."/>
            <person name="Tesler G."/>
            <person name="Pevzner P.A."/>
            <person name="Haussler D."/>
            <person name="Roskin K.M."/>
            <person name="Baertsch R."/>
            <person name="Clawson H."/>
            <person name="Furey T.S."/>
            <person name="Hinrichs A.S."/>
            <person name="Karolchik D."/>
            <person name="Kent W.J."/>
            <person name="Rosenbloom K.R."/>
            <person name="Trumbower H."/>
            <person name="Weirauch M."/>
            <person name="Cooper D.N."/>
            <person name="Stenson P.D."/>
            <person name="Ma B."/>
            <person name="Brent M."/>
            <person name="Arumugam M."/>
            <person name="Shteynberg D."/>
            <person name="Copley R.R."/>
            <person name="Taylor M.S."/>
            <person name="Riethman H."/>
            <person name="Mudunuri U."/>
            <person name="Peterson J."/>
            <person name="Guyer M."/>
            <person name="Felsenfeld A."/>
            <person name="Old S."/>
            <person name="Mockrin S."/>
            <person name="Collins F.S."/>
        </authorList>
    </citation>
    <scope>NUCLEOTIDE SEQUENCE [LARGE SCALE GENOMIC DNA]</scope>
    <source>
        <strain>Brown Norway</strain>
    </source>
</reference>
<reference key="2">
    <citation type="journal article" date="2001" name="J. Biol. Chem.">
        <title>Molecular cloning and characterization of UDP-GlcNAc:lactosylceramide beta 1,3-N-acetylglucosaminyltransferase (beta 3Gn-T5), an essential enzyme for the expression of HNK-1 and Lewis X epitopes on glycolipids.</title>
        <authorList>
            <person name="Togayachi A."/>
            <person name="Akashima T."/>
            <person name="Ookubo R."/>
            <person name="Kudo T."/>
            <person name="Nishihara S."/>
            <person name="Iwasaki H."/>
            <person name="Natsume A."/>
            <person name="Mio H."/>
            <person name="Inokuchi J."/>
            <person name="Irimura T."/>
            <person name="Sasaki K."/>
            <person name="Narimatsu H."/>
        </authorList>
    </citation>
    <scope>NUCLEOTIDE SEQUENCE [MRNA] OF 100-344</scope>
</reference>
<dbReference type="EC" id="2.4.1.206" evidence="2"/>
<dbReference type="EMBL" id="AABR03079736">
    <property type="status" value="NOT_ANNOTATED_CDS"/>
    <property type="molecule type" value="Genomic_DNA"/>
</dbReference>
<dbReference type="EMBL" id="AB045279">
    <property type="protein sequence ID" value="BAB40941.1"/>
    <property type="molecule type" value="mRNA"/>
</dbReference>
<dbReference type="RefSeq" id="NP_446384.1">
    <property type="nucleotide sequence ID" value="NM_053932.1"/>
</dbReference>
<dbReference type="SMR" id="Q99NB2"/>
<dbReference type="FunCoup" id="Q99NB2">
    <property type="interactions" value="622"/>
</dbReference>
<dbReference type="STRING" id="10116.ENSRNOP00000067153"/>
<dbReference type="CAZy" id="GT31">
    <property type="family name" value="Glycosyltransferase Family 31"/>
</dbReference>
<dbReference type="GlyCosmos" id="Q99NB2">
    <property type="glycosylation" value="1 site, No reported glycans"/>
</dbReference>
<dbReference type="GlyGen" id="Q99NB2">
    <property type="glycosylation" value="1 site"/>
</dbReference>
<dbReference type="PhosphoSitePlus" id="Q99NB2"/>
<dbReference type="PaxDb" id="10116-ENSRNOP00000067153"/>
<dbReference type="Ensembl" id="ENSRNOT00000071848.3">
    <property type="protein sequence ID" value="ENSRNOP00000067153.1"/>
    <property type="gene ID" value="ENSRNOG00000046258.3"/>
</dbReference>
<dbReference type="Ensembl" id="ENSRNOT00000093901.1">
    <property type="protein sequence ID" value="ENSRNOP00000085318.1"/>
    <property type="gene ID" value="ENSRNOG00000046258.3"/>
</dbReference>
<dbReference type="Ensembl" id="ENSRNOT00000103393.1">
    <property type="protein sequence ID" value="ENSRNOP00000079466.1"/>
    <property type="gene ID" value="ENSRNOG00000046258.3"/>
</dbReference>
<dbReference type="Ensembl" id="ENSRNOT00000106647.1">
    <property type="protein sequence ID" value="ENSRNOP00000086439.1"/>
    <property type="gene ID" value="ENSRNOG00000046258.3"/>
</dbReference>
<dbReference type="GeneID" id="116740"/>
<dbReference type="KEGG" id="rno:116740"/>
<dbReference type="AGR" id="RGD:70955"/>
<dbReference type="CTD" id="84002"/>
<dbReference type="RGD" id="70955">
    <property type="gene designation" value="B3gnt5"/>
</dbReference>
<dbReference type="eggNOG" id="KOG2287">
    <property type="taxonomic scope" value="Eukaryota"/>
</dbReference>
<dbReference type="GeneTree" id="ENSGT00940000159676"/>
<dbReference type="HOGENOM" id="CLU_036849_2_4_1"/>
<dbReference type="InParanoid" id="Q99NB2"/>
<dbReference type="OMA" id="VQLFATC"/>
<dbReference type="OrthoDB" id="115198at2759"/>
<dbReference type="PhylomeDB" id="Q99NB2"/>
<dbReference type="TreeFam" id="TF318639"/>
<dbReference type="BRENDA" id="2.4.1.206">
    <property type="organism ID" value="5301"/>
</dbReference>
<dbReference type="Reactome" id="R-RNO-913709">
    <property type="pathway name" value="O-linked glycosylation of mucins"/>
</dbReference>
<dbReference type="Reactome" id="R-RNO-9840309">
    <property type="pathway name" value="Glycosphingolipid biosynthesis"/>
</dbReference>
<dbReference type="UniPathway" id="UPA00378"/>
<dbReference type="PRO" id="PR:Q99NB2"/>
<dbReference type="Proteomes" id="UP000002494">
    <property type="component" value="Chromosome 11"/>
</dbReference>
<dbReference type="Bgee" id="ENSRNOG00000046258">
    <property type="expression patterns" value="Expressed in spleen and 9 other cell types or tissues"/>
</dbReference>
<dbReference type="GO" id="GO:0000139">
    <property type="term" value="C:Golgi membrane"/>
    <property type="evidence" value="ECO:0000318"/>
    <property type="project" value="GO_Central"/>
</dbReference>
<dbReference type="GO" id="GO:0016757">
    <property type="term" value="F:glycosyltransferase activity"/>
    <property type="evidence" value="ECO:0000318"/>
    <property type="project" value="GO_Central"/>
</dbReference>
<dbReference type="GO" id="GO:0047256">
    <property type="term" value="F:lactosylceramide 1,3-N-acetyl-beta-D-glucosaminyltransferase activity"/>
    <property type="evidence" value="ECO:0000266"/>
    <property type="project" value="RGD"/>
</dbReference>
<dbReference type="GO" id="GO:0007417">
    <property type="term" value="P:central nervous system development"/>
    <property type="evidence" value="ECO:0000266"/>
    <property type="project" value="RGD"/>
</dbReference>
<dbReference type="GO" id="GO:0006629">
    <property type="term" value="P:lipid metabolic process"/>
    <property type="evidence" value="ECO:0007669"/>
    <property type="project" value="UniProtKB-KW"/>
</dbReference>
<dbReference type="GO" id="GO:0006493">
    <property type="term" value="P:protein O-linked glycosylation"/>
    <property type="evidence" value="ECO:0000318"/>
    <property type="project" value="GO_Central"/>
</dbReference>
<dbReference type="FunFam" id="3.90.550.50:FF:000019">
    <property type="entry name" value="Hexosyltransferase"/>
    <property type="match status" value="1"/>
</dbReference>
<dbReference type="Gene3D" id="3.90.550.50">
    <property type="match status" value="1"/>
</dbReference>
<dbReference type="InterPro" id="IPR002659">
    <property type="entry name" value="Glyco_trans_31"/>
</dbReference>
<dbReference type="PANTHER" id="PTHR11214">
    <property type="entry name" value="BETA-1,3-N-ACETYLGLUCOSAMINYLTRANSFERASE"/>
    <property type="match status" value="1"/>
</dbReference>
<dbReference type="PANTHER" id="PTHR11214:SF21">
    <property type="entry name" value="LACTOSYLCERAMIDE 1,3-N-ACETYL-BETA-D-GLUCOSAMINYLTRANSFERASE"/>
    <property type="match status" value="1"/>
</dbReference>
<dbReference type="Pfam" id="PF01762">
    <property type="entry name" value="Galactosyl_T"/>
    <property type="match status" value="1"/>
</dbReference>
<organism>
    <name type="scientific">Rattus norvegicus</name>
    <name type="common">Rat</name>
    <dbReference type="NCBI Taxonomy" id="10116"/>
    <lineage>
        <taxon>Eukaryota</taxon>
        <taxon>Metazoa</taxon>
        <taxon>Chordata</taxon>
        <taxon>Craniata</taxon>
        <taxon>Vertebrata</taxon>
        <taxon>Euteleostomi</taxon>
        <taxon>Mammalia</taxon>
        <taxon>Eutheria</taxon>
        <taxon>Euarchontoglires</taxon>
        <taxon>Glires</taxon>
        <taxon>Rodentia</taxon>
        <taxon>Myomorpha</taxon>
        <taxon>Muroidea</taxon>
        <taxon>Muridae</taxon>
        <taxon>Murinae</taxon>
        <taxon>Rattus</taxon>
    </lineage>
</organism>
<comment type="function">
    <text evidence="3">Beta-1,3-N-acetylglucosaminyltransferase that plays a key role in the synthesis of lacto- or neolacto-series carbohydrate chains on glycolipids, notably by participating in biosynthesis of HNK-1 and Lewis X carbohydrate structures. Has strong activity toward lactosylceramide (LacCer) and neolactotetraosylceramide (nLc(4)Cer; paragloboside), resulting in the synthesis of Lc(3)Cer and neolactopentaosylceramide (nLc(5)Cer), respectively. Probably plays a central role in regulating neolacto-series glycolipid synthesis during embryonic development.</text>
</comment>
<comment type="catalytic activity">
    <reaction evidence="3">
        <text>a beta-D-Gal-(1-&gt;4)-beta-D-Glc-(1&lt;-&gt;1)-Cer(d18:1(4E)) + UDP-N-acetyl-alpha-D-glucosamine = a beta-D-GlcNAc-(1-&gt;3)-beta-D-Gal-(1-&gt;4)-beta-D-Glc-(1&lt;-&gt;1)-Cer(d18:1(4E)) + UDP + H(+)</text>
        <dbReference type="Rhea" id="RHEA:13905"/>
        <dbReference type="ChEBI" id="CHEBI:15378"/>
        <dbReference type="ChEBI" id="CHEBI:17103"/>
        <dbReference type="ChEBI" id="CHEBI:17950"/>
        <dbReference type="ChEBI" id="CHEBI:57705"/>
        <dbReference type="ChEBI" id="CHEBI:58223"/>
        <dbReference type="EC" id="2.4.1.206"/>
    </reaction>
    <physiologicalReaction direction="left-to-right" evidence="3">
        <dbReference type="Rhea" id="RHEA:13906"/>
    </physiologicalReaction>
</comment>
<comment type="catalytic activity">
    <reaction evidence="3">
        <text>a neolactoside nLc4Cer(d18:1(4E)) + UDP-N-acetyl-alpha-D-glucosamine = a neolactoside IV(3)-beta-GlcNAc-nLc4Cer(d18:1(4E)) + UDP + H(+)</text>
        <dbReference type="Rhea" id="RHEA:23004"/>
        <dbReference type="ChEBI" id="CHEBI:15378"/>
        <dbReference type="ChEBI" id="CHEBI:17006"/>
        <dbReference type="ChEBI" id="CHEBI:57705"/>
        <dbReference type="ChEBI" id="CHEBI:58223"/>
        <dbReference type="ChEBI" id="CHEBI:142448"/>
    </reaction>
    <physiologicalReaction direction="left-to-right" evidence="3">
        <dbReference type="Rhea" id="RHEA:23005"/>
    </physiologicalReaction>
</comment>
<comment type="pathway">
    <text>Protein modification; protein glycosylation.</text>
</comment>
<comment type="subcellular location">
    <subcellularLocation>
        <location evidence="1">Golgi apparatus membrane</location>
        <topology evidence="1">Single-pass type II membrane protein</topology>
    </subcellularLocation>
</comment>
<comment type="similarity">
    <text evidence="5">Belongs to the glycosyltransferase 31 family.</text>
</comment>